<keyword id="KW-0001">2Fe-2S</keyword>
<keyword id="KW-0002">3D-structure</keyword>
<keyword id="KW-0150">Chloroplast</keyword>
<keyword id="KW-0903">Direct protein sequencing</keyword>
<keyword id="KW-0249">Electron transport</keyword>
<keyword id="KW-0408">Iron</keyword>
<keyword id="KW-0411">Iron-sulfur</keyword>
<keyword id="KW-0479">Metal-binding</keyword>
<keyword id="KW-0934">Plastid</keyword>
<keyword id="KW-0809">Transit peptide</keyword>
<keyword id="KW-0813">Transport</keyword>
<dbReference type="EMBL" id="M31713">
    <property type="protein sequence ID" value="AAA33665.1"/>
    <property type="molecule type" value="Genomic_DNA"/>
</dbReference>
<dbReference type="EMBL" id="M17107">
    <property type="status" value="NOT_ANNOTATED_CDS"/>
    <property type="molecule type" value="mRNA"/>
</dbReference>
<dbReference type="PIR" id="S11495">
    <property type="entry name" value="FEPM1"/>
</dbReference>
<dbReference type="PDB" id="6YAC">
    <property type="method" value="EM"/>
    <property type="resolution" value="2.50 A"/>
    <property type="chains" value="N=53-149"/>
</dbReference>
<dbReference type="PDB" id="6YEZ">
    <property type="method" value="EM"/>
    <property type="resolution" value="2.70 A"/>
    <property type="chains" value="N=53-149"/>
</dbReference>
<dbReference type="PDBsum" id="6YAC"/>
<dbReference type="PDBsum" id="6YEZ"/>
<dbReference type="EMDB" id="EMD-10746"/>
<dbReference type="EMDB" id="EMD-10798"/>
<dbReference type="SMR" id="P09911"/>
<dbReference type="DIP" id="DIP-384N"/>
<dbReference type="IntAct" id="P09911">
    <property type="interactions" value="2"/>
</dbReference>
<dbReference type="MINT" id="P09911"/>
<dbReference type="EnsemblPlants" id="Psat3g090040.1">
    <property type="protein sequence ID" value="Psat3g090040.1.cds1"/>
    <property type="gene ID" value="Psat3g090040"/>
</dbReference>
<dbReference type="Gramene" id="Psat3g090040.1">
    <property type="protein sequence ID" value="Psat3g090040.1.cds1"/>
    <property type="gene ID" value="Psat3g090040"/>
</dbReference>
<dbReference type="OrthoDB" id="1885901at2759"/>
<dbReference type="GO" id="GO:0009570">
    <property type="term" value="C:chloroplast stroma"/>
    <property type="evidence" value="ECO:0007669"/>
    <property type="project" value="TreeGrafter"/>
</dbReference>
<dbReference type="GO" id="GO:0051537">
    <property type="term" value="F:2 iron, 2 sulfur cluster binding"/>
    <property type="evidence" value="ECO:0007669"/>
    <property type="project" value="UniProtKB-KW"/>
</dbReference>
<dbReference type="GO" id="GO:0009055">
    <property type="term" value="F:electron transfer activity"/>
    <property type="evidence" value="ECO:0007669"/>
    <property type="project" value="InterPro"/>
</dbReference>
<dbReference type="GO" id="GO:0046872">
    <property type="term" value="F:metal ion binding"/>
    <property type="evidence" value="ECO:0007669"/>
    <property type="project" value="UniProtKB-KW"/>
</dbReference>
<dbReference type="GO" id="GO:0022900">
    <property type="term" value="P:electron transport chain"/>
    <property type="evidence" value="ECO:0007669"/>
    <property type="project" value="InterPro"/>
</dbReference>
<dbReference type="CDD" id="cd00207">
    <property type="entry name" value="fer2"/>
    <property type="match status" value="1"/>
</dbReference>
<dbReference type="FunFam" id="3.10.20.30:FF:000014">
    <property type="entry name" value="Ferredoxin"/>
    <property type="match status" value="1"/>
</dbReference>
<dbReference type="Gene3D" id="3.10.20.30">
    <property type="match status" value="1"/>
</dbReference>
<dbReference type="InterPro" id="IPR036010">
    <property type="entry name" value="2Fe-2S_ferredoxin-like_sf"/>
</dbReference>
<dbReference type="InterPro" id="IPR001041">
    <property type="entry name" value="2Fe-2S_ferredoxin-type"/>
</dbReference>
<dbReference type="InterPro" id="IPR006058">
    <property type="entry name" value="2Fe2S_fd_BS"/>
</dbReference>
<dbReference type="InterPro" id="IPR012675">
    <property type="entry name" value="Beta-grasp_dom_sf"/>
</dbReference>
<dbReference type="InterPro" id="IPR010241">
    <property type="entry name" value="Fd_pln"/>
</dbReference>
<dbReference type="NCBIfam" id="TIGR02008">
    <property type="entry name" value="fdx_plant"/>
    <property type="match status" value="1"/>
</dbReference>
<dbReference type="PANTHER" id="PTHR43112">
    <property type="entry name" value="FERREDOXIN"/>
    <property type="match status" value="1"/>
</dbReference>
<dbReference type="PANTHER" id="PTHR43112:SF3">
    <property type="entry name" value="FERREDOXIN-2, CHLOROPLASTIC"/>
    <property type="match status" value="1"/>
</dbReference>
<dbReference type="Pfam" id="PF00111">
    <property type="entry name" value="Fer2"/>
    <property type="match status" value="1"/>
</dbReference>
<dbReference type="SUPFAM" id="SSF54292">
    <property type="entry name" value="2Fe-2S ferredoxin-like"/>
    <property type="match status" value="1"/>
</dbReference>
<dbReference type="PROSITE" id="PS00197">
    <property type="entry name" value="2FE2S_FER_1"/>
    <property type="match status" value="1"/>
</dbReference>
<dbReference type="PROSITE" id="PS51085">
    <property type="entry name" value="2FE2S_FER_2"/>
    <property type="match status" value="1"/>
</dbReference>
<gene>
    <name type="primary">PETF</name>
    <name type="synonym">FED1</name>
</gene>
<proteinExistence type="evidence at protein level"/>
<feature type="transit peptide" description="Chloroplast" evidence="3">
    <location>
        <begin position="1"/>
        <end position="52"/>
    </location>
</feature>
<feature type="chain" id="PRO_0000008836" description="Ferredoxin-1, chloroplastic">
    <location>
        <begin position="53"/>
        <end position="149"/>
    </location>
</feature>
<feature type="domain" description="2Fe-2S ferredoxin-type" evidence="2">
    <location>
        <begin position="55"/>
        <end position="145"/>
    </location>
</feature>
<feature type="binding site" evidence="2">
    <location>
        <position position="91"/>
    </location>
    <ligand>
        <name>[2Fe-2S] cluster</name>
        <dbReference type="ChEBI" id="CHEBI:190135"/>
    </ligand>
</feature>
<feature type="binding site" evidence="2">
    <location>
        <position position="96"/>
    </location>
    <ligand>
        <name>[2Fe-2S] cluster</name>
        <dbReference type="ChEBI" id="CHEBI:190135"/>
    </ligand>
</feature>
<feature type="binding site" evidence="2">
    <location>
        <position position="99"/>
    </location>
    <ligand>
        <name>[2Fe-2S] cluster</name>
        <dbReference type="ChEBI" id="CHEBI:190135"/>
    </ligand>
</feature>
<feature type="binding site" evidence="2">
    <location>
        <position position="129"/>
    </location>
    <ligand>
        <name>[2Fe-2S] cluster</name>
        <dbReference type="ChEBI" id="CHEBI:190135"/>
    </ligand>
</feature>
<feature type="sequence variant" description="In strain: cv. Onward.">
    <original>L</original>
    <variation>I</variation>
    <location>
        <position position="59"/>
    </location>
</feature>
<feature type="sequence variant" description="In strain: cv. Onward.">
    <original>I</original>
    <variation>L</variation>
    <location>
        <position position="85"/>
    </location>
</feature>
<feature type="strand" evidence="5">
    <location>
        <begin position="56"/>
        <end position="61"/>
    </location>
</feature>
<feature type="strand" evidence="5">
    <location>
        <begin position="64"/>
        <end position="69"/>
    </location>
</feature>
<feature type="helix" evidence="5">
    <location>
        <begin position="76"/>
        <end position="83"/>
    </location>
</feature>
<feature type="strand" evidence="5">
    <location>
        <begin position="92"/>
        <end position="101"/>
    </location>
</feature>
<feature type="strand" evidence="5">
    <location>
        <begin position="103"/>
        <end position="106"/>
    </location>
</feature>
<feature type="strand" evidence="6">
    <location>
        <begin position="109"/>
        <end position="112"/>
    </location>
</feature>
<feature type="turn" evidence="5">
    <location>
        <begin position="118"/>
        <end position="122"/>
    </location>
</feature>
<feature type="helix" evidence="5">
    <location>
        <begin position="128"/>
        <end position="130"/>
    </location>
</feature>
<feature type="strand" evidence="5">
    <location>
        <begin position="135"/>
        <end position="140"/>
    </location>
</feature>
<feature type="helix" evidence="5">
    <location>
        <begin position="145"/>
        <end position="148"/>
    </location>
</feature>
<name>FER1_PEA</name>
<protein>
    <recommendedName>
        <fullName>Ferredoxin-1, chloroplastic</fullName>
    </recommendedName>
    <alternativeName>
        <fullName>Ferredoxin I</fullName>
    </alternativeName>
</protein>
<sequence>MATTPALYGTAVSTSFLRTQPMPMSVTTTKAFSNGFLGLKTSLKRGDLAVAMASYKVKLVTPDGTQEFECPSDVYILDHAEEVGIDLPYSCRAGSCSSCAGKVVGGEVDQSDGSFLDDEQIEAGFVLTCVAYPTSDVVIETHKEEDLTA</sequence>
<accession>P09911</accession>
<evidence type="ECO:0000250" key="1"/>
<evidence type="ECO:0000255" key="2">
    <source>
        <dbReference type="PROSITE-ProRule" id="PRU00465"/>
    </source>
</evidence>
<evidence type="ECO:0000269" key="3">
    <source ref="3"/>
</evidence>
<evidence type="ECO:0000305" key="4"/>
<evidence type="ECO:0007829" key="5">
    <source>
        <dbReference type="PDB" id="6YAC"/>
    </source>
</evidence>
<evidence type="ECO:0007829" key="6">
    <source>
        <dbReference type="PDB" id="6YEZ"/>
    </source>
</evidence>
<reference key="1">
    <citation type="journal article" date="1989" name="Plant Cell">
        <title>Characterization of a single copy gene encoding ferredoxin I from pea.</title>
        <authorList>
            <person name="Elliott R.C."/>
            <person name="Pedersen T.J."/>
            <person name="Fristensky B.W."/>
            <person name="White M.J."/>
            <person name="Dickey L.F."/>
            <person name="Thompson W.F."/>
        </authorList>
    </citation>
    <scope>NUCLEOTIDE SEQUENCE [GENOMIC DNA]</scope>
    <source>
        <strain>cv. Alaska</strain>
    </source>
</reference>
<reference key="2">
    <citation type="journal article" date="1987" name="Plant Mol. Biol.">
        <title>A phytochrome regulated pea transcript encodes ferredoxin I.</title>
        <authorList>
            <person name="Dobres M.S."/>
            <person name="Elliott R.C."/>
            <person name="Watson J.C."/>
            <person name="Thompson W.F."/>
        </authorList>
    </citation>
    <scope>NUCLEOTIDE SEQUENCE [MRNA] OF 31-135</scope>
    <source>
        <strain>cv. Alaska</strain>
    </source>
</reference>
<reference key="3">
    <citation type="journal article" date="1980" name="J. Exp. Bot.">
        <title>Comparative studies on the properties of two ferredoxins from Pisum sativum L.</title>
        <authorList>
            <person name="Dutton J.E."/>
            <person name="Rogers L.J."/>
            <person name="Haslett B.G."/>
            <person name="Takruri I.A.H."/>
            <person name="Gleaves J.T."/>
            <person name="Boulter D."/>
        </authorList>
    </citation>
    <scope>PROTEIN SEQUENCE OF 53-89</scope>
    <scope>FUNCTION</scope>
    <source>
        <strain>cv. Onward</strain>
    </source>
</reference>
<comment type="function">
    <text evidence="3">Ferredoxins are iron-sulfur proteins that transfer electrons in a wide variety of metabolic reactions.</text>
</comment>
<comment type="cofactor">
    <cofactor>
        <name>[2Fe-2S] cluster</name>
        <dbReference type="ChEBI" id="CHEBI:190135"/>
    </cofactor>
    <text>Binds 1 [2Fe-2S] cluster.</text>
</comment>
<comment type="subunit">
    <text evidence="1">Forms a complex with heterodimeric ferredoxin-thioredoxin reductase (FTR) and thioredoxin.</text>
</comment>
<comment type="interaction">
    <interactant intactId="EBI-931449">
        <id>P09911</id>
    </interactant>
    <interactant intactId="EBI-931306">
        <id>P10933</id>
        <label>PETH</label>
    </interactant>
    <organismsDiffer>false</organismsDiffer>
    <experiments>3</experiments>
</comment>
<comment type="subcellular location">
    <subcellularLocation>
        <location>Plastid</location>
        <location>Chloroplast</location>
    </subcellularLocation>
</comment>
<comment type="similarity">
    <text evidence="4">Belongs to the 2Fe2S plant-type ferredoxin family.</text>
</comment>
<organism>
    <name type="scientific">Pisum sativum</name>
    <name type="common">Garden pea</name>
    <name type="synonym">Lathyrus oleraceus</name>
    <dbReference type="NCBI Taxonomy" id="3888"/>
    <lineage>
        <taxon>Eukaryota</taxon>
        <taxon>Viridiplantae</taxon>
        <taxon>Streptophyta</taxon>
        <taxon>Embryophyta</taxon>
        <taxon>Tracheophyta</taxon>
        <taxon>Spermatophyta</taxon>
        <taxon>Magnoliopsida</taxon>
        <taxon>eudicotyledons</taxon>
        <taxon>Gunneridae</taxon>
        <taxon>Pentapetalae</taxon>
        <taxon>rosids</taxon>
        <taxon>fabids</taxon>
        <taxon>Fabales</taxon>
        <taxon>Fabaceae</taxon>
        <taxon>Papilionoideae</taxon>
        <taxon>50 kb inversion clade</taxon>
        <taxon>NPAAA clade</taxon>
        <taxon>Hologalegina</taxon>
        <taxon>IRL clade</taxon>
        <taxon>Fabeae</taxon>
        <taxon>Pisum</taxon>
    </lineage>
</organism>